<protein>
    <recommendedName>
        <fullName evidence="1">Diaminopimelate epimerase</fullName>
        <shortName evidence="1">DAP epimerase</shortName>
        <ecNumber evidence="1">5.1.1.7</ecNumber>
    </recommendedName>
    <alternativeName>
        <fullName evidence="1">PLP-independent amino acid racemase</fullName>
    </alternativeName>
</protein>
<dbReference type="EC" id="5.1.1.7" evidence="1"/>
<dbReference type="EMBL" id="CP001407">
    <property type="protein sequence ID" value="ACO29639.1"/>
    <property type="molecule type" value="Genomic_DNA"/>
</dbReference>
<dbReference type="RefSeq" id="WP_000077385.1">
    <property type="nucleotide sequence ID" value="NZ_CP009318.1"/>
</dbReference>
<dbReference type="SMR" id="C1EX98"/>
<dbReference type="KEGG" id="bcx:BCA_5072"/>
<dbReference type="PATRIC" id="fig|572264.18.peg.4994"/>
<dbReference type="UniPathway" id="UPA00034">
    <property type="reaction ID" value="UER00025"/>
</dbReference>
<dbReference type="Proteomes" id="UP000002210">
    <property type="component" value="Chromosome"/>
</dbReference>
<dbReference type="GO" id="GO:0005829">
    <property type="term" value="C:cytosol"/>
    <property type="evidence" value="ECO:0007669"/>
    <property type="project" value="TreeGrafter"/>
</dbReference>
<dbReference type="GO" id="GO:0008837">
    <property type="term" value="F:diaminopimelate epimerase activity"/>
    <property type="evidence" value="ECO:0007669"/>
    <property type="project" value="UniProtKB-UniRule"/>
</dbReference>
<dbReference type="GO" id="GO:0009089">
    <property type="term" value="P:lysine biosynthetic process via diaminopimelate"/>
    <property type="evidence" value="ECO:0007669"/>
    <property type="project" value="UniProtKB-UniRule"/>
</dbReference>
<dbReference type="FunFam" id="3.10.310.10:FF:000004">
    <property type="entry name" value="Diaminopimelate epimerase"/>
    <property type="match status" value="1"/>
</dbReference>
<dbReference type="FunFam" id="3.10.310.10:FF:000006">
    <property type="entry name" value="Diaminopimelate epimerase"/>
    <property type="match status" value="1"/>
</dbReference>
<dbReference type="Gene3D" id="3.10.310.10">
    <property type="entry name" value="Diaminopimelate Epimerase, Chain A, domain 1"/>
    <property type="match status" value="2"/>
</dbReference>
<dbReference type="HAMAP" id="MF_00197">
    <property type="entry name" value="DAP_epimerase"/>
    <property type="match status" value="1"/>
</dbReference>
<dbReference type="InterPro" id="IPR018510">
    <property type="entry name" value="DAP_epimerase_AS"/>
</dbReference>
<dbReference type="InterPro" id="IPR001653">
    <property type="entry name" value="DAP_epimerase_DapF"/>
</dbReference>
<dbReference type="NCBIfam" id="TIGR00652">
    <property type="entry name" value="DapF"/>
    <property type="match status" value="1"/>
</dbReference>
<dbReference type="PANTHER" id="PTHR31689:SF0">
    <property type="entry name" value="DIAMINOPIMELATE EPIMERASE"/>
    <property type="match status" value="1"/>
</dbReference>
<dbReference type="PANTHER" id="PTHR31689">
    <property type="entry name" value="DIAMINOPIMELATE EPIMERASE, CHLOROPLASTIC"/>
    <property type="match status" value="1"/>
</dbReference>
<dbReference type="Pfam" id="PF01678">
    <property type="entry name" value="DAP_epimerase"/>
    <property type="match status" value="2"/>
</dbReference>
<dbReference type="SUPFAM" id="SSF54506">
    <property type="entry name" value="Diaminopimelate epimerase-like"/>
    <property type="match status" value="1"/>
</dbReference>
<dbReference type="PROSITE" id="PS01326">
    <property type="entry name" value="DAP_EPIMERASE"/>
    <property type="match status" value="1"/>
</dbReference>
<keyword id="KW-0028">Amino-acid biosynthesis</keyword>
<keyword id="KW-0963">Cytoplasm</keyword>
<keyword id="KW-0413">Isomerase</keyword>
<keyword id="KW-0457">Lysine biosynthesis</keyword>
<name>DAPF_BACC3</name>
<gene>
    <name evidence="1" type="primary">dapF</name>
    <name type="ordered locus">BCA_5072</name>
</gene>
<evidence type="ECO:0000255" key="1">
    <source>
        <dbReference type="HAMAP-Rule" id="MF_00197"/>
    </source>
</evidence>
<reference key="1">
    <citation type="submission" date="2009-02" db="EMBL/GenBank/DDBJ databases">
        <title>Genome sequence of Bacillus cereus 03BB102.</title>
        <authorList>
            <person name="Dodson R.J."/>
            <person name="Jackson P."/>
            <person name="Munk A.C."/>
            <person name="Brettin T."/>
            <person name="Bruce D."/>
            <person name="Detter C."/>
            <person name="Tapia R."/>
            <person name="Han C."/>
            <person name="Sutton G."/>
            <person name="Sims D."/>
        </authorList>
    </citation>
    <scope>NUCLEOTIDE SEQUENCE [LARGE SCALE GENOMIC DNA]</scope>
    <source>
        <strain>03BB102</strain>
    </source>
</reference>
<feature type="chain" id="PRO_1000124401" description="Diaminopimelate epimerase">
    <location>
        <begin position="1"/>
        <end position="288"/>
    </location>
</feature>
<feature type="active site" description="Proton donor" evidence="1">
    <location>
        <position position="76"/>
    </location>
</feature>
<feature type="active site" description="Proton acceptor" evidence="1">
    <location>
        <position position="226"/>
    </location>
</feature>
<feature type="binding site" evidence="1">
    <location>
        <position position="14"/>
    </location>
    <ligand>
        <name>substrate</name>
    </ligand>
</feature>
<feature type="binding site" evidence="1">
    <location>
        <position position="67"/>
    </location>
    <ligand>
        <name>substrate</name>
    </ligand>
</feature>
<feature type="binding site" evidence="1">
    <location>
        <begin position="77"/>
        <end position="78"/>
    </location>
    <ligand>
        <name>substrate</name>
    </ligand>
</feature>
<feature type="binding site" evidence="1">
    <location>
        <position position="166"/>
    </location>
    <ligand>
        <name>substrate</name>
    </ligand>
</feature>
<feature type="binding site" evidence="1">
    <location>
        <position position="199"/>
    </location>
    <ligand>
        <name>substrate</name>
    </ligand>
</feature>
<feature type="binding site" evidence="1">
    <location>
        <begin position="217"/>
        <end position="218"/>
    </location>
    <ligand>
        <name>substrate</name>
    </ligand>
</feature>
<feature type="binding site" evidence="1">
    <location>
        <begin position="227"/>
        <end position="228"/>
    </location>
    <ligand>
        <name>substrate</name>
    </ligand>
</feature>
<feature type="site" description="Could be important to modulate the pK values of the two catalytic cysteine residues" evidence="1">
    <location>
        <position position="168"/>
    </location>
</feature>
<feature type="site" description="Could be important to modulate the pK values of the two catalytic cysteine residues" evidence="1">
    <location>
        <position position="217"/>
    </location>
</feature>
<comment type="function">
    <text evidence="1">Catalyzes the stereoinversion of LL-2,6-diaminopimelate (L,L-DAP) to meso-diaminopimelate (meso-DAP), a precursor of L-lysine and an essential component of the bacterial peptidoglycan.</text>
</comment>
<comment type="catalytic activity">
    <reaction evidence="1">
        <text>(2S,6S)-2,6-diaminopimelate = meso-2,6-diaminopimelate</text>
        <dbReference type="Rhea" id="RHEA:15393"/>
        <dbReference type="ChEBI" id="CHEBI:57609"/>
        <dbReference type="ChEBI" id="CHEBI:57791"/>
        <dbReference type="EC" id="5.1.1.7"/>
    </reaction>
</comment>
<comment type="pathway">
    <text evidence="1">Amino-acid biosynthesis; L-lysine biosynthesis via DAP pathway; DL-2,6-diaminopimelate from LL-2,6-diaminopimelate: step 1/1.</text>
</comment>
<comment type="subunit">
    <text evidence="1">Homodimer.</text>
</comment>
<comment type="subcellular location">
    <subcellularLocation>
        <location evidence="1">Cytoplasm</location>
    </subcellularLocation>
</comment>
<comment type="similarity">
    <text evidence="1">Belongs to the diaminopimelate epimerase family.</text>
</comment>
<proteinExistence type="inferred from homology"/>
<organism>
    <name type="scientific">Bacillus cereus (strain 03BB102)</name>
    <dbReference type="NCBI Taxonomy" id="572264"/>
    <lineage>
        <taxon>Bacteria</taxon>
        <taxon>Bacillati</taxon>
        <taxon>Bacillota</taxon>
        <taxon>Bacilli</taxon>
        <taxon>Bacillales</taxon>
        <taxon>Bacillaceae</taxon>
        <taxon>Bacillus</taxon>
        <taxon>Bacillus cereus group</taxon>
    </lineage>
</organism>
<accession>C1EX98</accession>
<sequence length="288" mass="31594">MSQFSFTKMHGLGNSYIYVNMFEEQIPEEDLALVAEKVSNINTGIGADGMILICPSDVAPVKMRMFNNDGSEGKSCGNGLRCVAKYAYEHKLVEDTVFTIETLAGIVTAEVTVEEGKVTLAKIDMGAPRLTRAEIPMLGEGETPFIRENFLYNNHRYAFTAVSMGNPHAVIFVDDVEQAPLTTLGPVLETHEMFPERVNVEFIEILNEEEMNFRVWERGSGVTQACGTGACAAVVASILNGKMERGKEITVHLAGGDLMIAWTEEGNVLMKGPAEVICHGVYEYKIEA</sequence>